<evidence type="ECO:0000255" key="1">
    <source>
        <dbReference type="HAMAP-Rule" id="MF_01302"/>
    </source>
</evidence>
<evidence type="ECO:0000305" key="2"/>
<dbReference type="EMBL" id="AE008692">
    <property type="protein sequence ID" value="AAV89154.1"/>
    <property type="molecule type" value="Genomic_DNA"/>
</dbReference>
<dbReference type="RefSeq" id="WP_011240437.1">
    <property type="nucleotide sequence ID" value="NZ_CP035711.1"/>
</dbReference>
<dbReference type="SMR" id="Q5NQ51"/>
<dbReference type="STRING" id="264203.ZMO0530"/>
<dbReference type="GeneID" id="79904278"/>
<dbReference type="KEGG" id="zmo:ZMO0530"/>
<dbReference type="eggNOG" id="COG0096">
    <property type="taxonomic scope" value="Bacteria"/>
</dbReference>
<dbReference type="HOGENOM" id="CLU_098428_0_0_5"/>
<dbReference type="Proteomes" id="UP000001173">
    <property type="component" value="Chromosome"/>
</dbReference>
<dbReference type="GO" id="GO:1990904">
    <property type="term" value="C:ribonucleoprotein complex"/>
    <property type="evidence" value="ECO:0007669"/>
    <property type="project" value="UniProtKB-KW"/>
</dbReference>
<dbReference type="GO" id="GO:0005840">
    <property type="term" value="C:ribosome"/>
    <property type="evidence" value="ECO:0007669"/>
    <property type="project" value="UniProtKB-KW"/>
</dbReference>
<dbReference type="GO" id="GO:0019843">
    <property type="term" value="F:rRNA binding"/>
    <property type="evidence" value="ECO:0007669"/>
    <property type="project" value="UniProtKB-UniRule"/>
</dbReference>
<dbReference type="GO" id="GO:0003735">
    <property type="term" value="F:structural constituent of ribosome"/>
    <property type="evidence" value="ECO:0007669"/>
    <property type="project" value="InterPro"/>
</dbReference>
<dbReference type="GO" id="GO:0006412">
    <property type="term" value="P:translation"/>
    <property type="evidence" value="ECO:0007669"/>
    <property type="project" value="UniProtKB-UniRule"/>
</dbReference>
<dbReference type="FunFam" id="3.30.1490.10:FF:000001">
    <property type="entry name" value="30S ribosomal protein S8"/>
    <property type="match status" value="1"/>
</dbReference>
<dbReference type="Gene3D" id="3.30.1370.30">
    <property type="match status" value="1"/>
</dbReference>
<dbReference type="Gene3D" id="3.30.1490.10">
    <property type="match status" value="1"/>
</dbReference>
<dbReference type="HAMAP" id="MF_01302_B">
    <property type="entry name" value="Ribosomal_uS8_B"/>
    <property type="match status" value="1"/>
</dbReference>
<dbReference type="InterPro" id="IPR000630">
    <property type="entry name" value="Ribosomal_uS8"/>
</dbReference>
<dbReference type="InterPro" id="IPR047863">
    <property type="entry name" value="Ribosomal_uS8_CS"/>
</dbReference>
<dbReference type="InterPro" id="IPR035987">
    <property type="entry name" value="Ribosomal_uS8_sf"/>
</dbReference>
<dbReference type="NCBIfam" id="NF001109">
    <property type="entry name" value="PRK00136.1"/>
    <property type="match status" value="1"/>
</dbReference>
<dbReference type="PANTHER" id="PTHR11758">
    <property type="entry name" value="40S RIBOSOMAL PROTEIN S15A"/>
    <property type="match status" value="1"/>
</dbReference>
<dbReference type="Pfam" id="PF00410">
    <property type="entry name" value="Ribosomal_S8"/>
    <property type="match status" value="1"/>
</dbReference>
<dbReference type="SUPFAM" id="SSF56047">
    <property type="entry name" value="Ribosomal protein S8"/>
    <property type="match status" value="1"/>
</dbReference>
<dbReference type="PROSITE" id="PS00053">
    <property type="entry name" value="RIBOSOMAL_S8"/>
    <property type="match status" value="1"/>
</dbReference>
<reference key="1">
    <citation type="journal article" date="2005" name="Nat. Biotechnol.">
        <title>The genome sequence of the ethanologenic bacterium Zymomonas mobilis ZM4.</title>
        <authorList>
            <person name="Seo J.-S."/>
            <person name="Chong H."/>
            <person name="Park H.S."/>
            <person name="Yoon K.-O."/>
            <person name="Jung C."/>
            <person name="Kim J.J."/>
            <person name="Hong J.H."/>
            <person name="Kim H."/>
            <person name="Kim J.-H."/>
            <person name="Kil J.-I."/>
            <person name="Park C.J."/>
            <person name="Oh H.-M."/>
            <person name="Lee J.-S."/>
            <person name="Jin S.-J."/>
            <person name="Um H.-W."/>
            <person name="Lee H.-J."/>
            <person name="Oh S.-J."/>
            <person name="Kim J.Y."/>
            <person name="Kang H.L."/>
            <person name="Lee S.Y."/>
            <person name="Lee K.J."/>
            <person name="Kang H.S."/>
        </authorList>
    </citation>
    <scope>NUCLEOTIDE SEQUENCE [LARGE SCALE GENOMIC DNA]</scope>
    <source>
        <strain>ATCC 31821 / ZM4 / CP4</strain>
    </source>
</reference>
<protein>
    <recommendedName>
        <fullName evidence="1">Small ribosomal subunit protein uS8</fullName>
    </recommendedName>
    <alternativeName>
        <fullName evidence="2">30S ribosomal protein S8</fullName>
    </alternativeName>
</protein>
<proteinExistence type="inferred from homology"/>
<comment type="function">
    <text evidence="1">One of the primary rRNA binding proteins, it binds directly to 16S rRNA central domain where it helps coordinate assembly of the platform of the 30S subunit.</text>
</comment>
<comment type="subunit">
    <text evidence="1">Part of the 30S ribosomal subunit. Contacts proteins S5 and S12.</text>
</comment>
<comment type="similarity">
    <text evidence="1">Belongs to the universal ribosomal protein uS8 family.</text>
</comment>
<name>RS8_ZYMMO</name>
<feature type="chain" id="PRO_0000126533" description="Small ribosomal subunit protein uS8">
    <location>
        <begin position="1"/>
        <end position="131"/>
    </location>
</feature>
<keyword id="KW-1185">Reference proteome</keyword>
<keyword id="KW-0687">Ribonucleoprotein</keyword>
<keyword id="KW-0689">Ribosomal protein</keyword>
<keyword id="KW-0694">RNA-binding</keyword>
<keyword id="KW-0699">rRNA-binding</keyword>
<sequence length="131" mass="14410">MALSDPLGDLLTRIRNGQHARKDSVVSPASKLRVRVLDVLAREGYIRGYTEAKLGNHDALRIELKYFEGQPAIHHLARVSKPGRRIYSGSRELPRVRNGLGITIVSTPKGVLSDAEARDQNVGGEVLAEVF</sequence>
<gene>
    <name evidence="1" type="primary">rpsH</name>
    <name type="ordered locus">ZMO0530</name>
</gene>
<organism>
    <name type="scientific">Zymomonas mobilis subsp. mobilis (strain ATCC 31821 / ZM4 / CP4)</name>
    <dbReference type="NCBI Taxonomy" id="264203"/>
    <lineage>
        <taxon>Bacteria</taxon>
        <taxon>Pseudomonadati</taxon>
        <taxon>Pseudomonadota</taxon>
        <taxon>Alphaproteobacteria</taxon>
        <taxon>Sphingomonadales</taxon>
        <taxon>Zymomonadaceae</taxon>
        <taxon>Zymomonas</taxon>
    </lineage>
</organism>
<accession>Q5NQ51</accession>